<keyword id="KW-1185">Reference proteome</keyword>
<keyword id="KW-0694">RNA-binding</keyword>
<keyword id="KW-0346">Stress response</keyword>
<organism>
    <name type="scientific">Actinobacillus pleuropneumoniae serotype 5b (strain L20)</name>
    <dbReference type="NCBI Taxonomy" id="416269"/>
    <lineage>
        <taxon>Bacteria</taxon>
        <taxon>Pseudomonadati</taxon>
        <taxon>Pseudomonadota</taxon>
        <taxon>Gammaproteobacteria</taxon>
        <taxon>Pasteurellales</taxon>
        <taxon>Pasteurellaceae</taxon>
        <taxon>Actinobacillus</taxon>
    </lineage>
</organism>
<comment type="function">
    <text evidence="1">RNA chaperone that binds small regulatory RNA (sRNAs) and mRNAs to facilitate mRNA translational regulation in response to envelope stress, environmental stress and changes in metabolite concentrations. Also binds with high specificity to tRNAs.</text>
</comment>
<comment type="subunit">
    <text evidence="1">Homohexamer.</text>
</comment>
<comment type="similarity">
    <text evidence="1">Belongs to the Hfq family.</text>
</comment>
<name>HFQ_ACTP2</name>
<protein>
    <recommendedName>
        <fullName evidence="1">RNA-binding protein Hfq</fullName>
    </recommendedName>
</protein>
<feature type="chain" id="PRO_1000025885" description="RNA-binding protein Hfq">
    <location>
        <begin position="1"/>
        <end position="92"/>
    </location>
</feature>
<feature type="domain" description="Sm" evidence="2">
    <location>
        <begin position="9"/>
        <end position="68"/>
    </location>
</feature>
<feature type="region of interest" description="Disordered" evidence="3">
    <location>
        <begin position="69"/>
        <end position="92"/>
    </location>
</feature>
<feature type="compositionally biased region" description="Polar residues" evidence="3">
    <location>
        <begin position="69"/>
        <end position="81"/>
    </location>
</feature>
<gene>
    <name evidence="1" type="primary">hfq</name>
    <name type="ordered locus">APL_1961</name>
</gene>
<evidence type="ECO:0000255" key="1">
    <source>
        <dbReference type="HAMAP-Rule" id="MF_00436"/>
    </source>
</evidence>
<evidence type="ECO:0000255" key="2">
    <source>
        <dbReference type="PROSITE-ProRule" id="PRU01346"/>
    </source>
</evidence>
<evidence type="ECO:0000256" key="3">
    <source>
        <dbReference type="SAM" id="MobiDB-lite"/>
    </source>
</evidence>
<accession>A3N3P9</accession>
<reference key="1">
    <citation type="journal article" date="2008" name="J. Bacteriol.">
        <title>The complete genome sequence of Actinobacillus pleuropneumoniae L20 (serotype 5b).</title>
        <authorList>
            <person name="Foote S.J."/>
            <person name="Bosse J.T."/>
            <person name="Bouevitch A.B."/>
            <person name="Langford P.R."/>
            <person name="Young N.M."/>
            <person name="Nash J.H.E."/>
        </authorList>
    </citation>
    <scope>NUCLEOTIDE SEQUENCE [LARGE SCALE GENOMIC DNA]</scope>
    <source>
        <strain>L20</strain>
    </source>
</reference>
<dbReference type="EMBL" id="CP000569">
    <property type="protein sequence ID" value="ABN75035.1"/>
    <property type="molecule type" value="Genomic_DNA"/>
</dbReference>
<dbReference type="RefSeq" id="WP_005599741.1">
    <property type="nucleotide sequence ID" value="NC_009053.1"/>
</dbReference>
<dbReference type="SMR" id="A3N3P9"/>
<dbReference type="STRING" id="416269.APL_1961"/>
<dbReference type="EnsemblBacteria" id="ABN75035">
    <property type="protein sequence ID" value="ABN75035"/>
    <property type="gene ID" value="APL_1961"/>
</dbReference>
<dbReference type="GeneID" id="48600262"/>
<dbReference type="KEGG" id="apl:APL_1961"/>
<dbReference type="eggNOG" id="COG1923">
    <property type="taxonomic scope" value="Bacteria"/>
</dbReference>
<dbReference type="HOGENOM" id="CLU_113688_2_0_6"/>
<dbReference type="PHI-base" id="PHI:11023"/>
<dbReference type="Proteomes" id="UP000001432">
    <property type="component" value="Chromosome"/>
</dbReference>
<dbReference type="GO" id="GO:0005829">
    <property type="term" value="C:cytosol"/>
    <property type="evidence" value="ECO:0007669"/>
    <property type="project" value="TreeGrafter"/>
</dbReference>
<dbReference type="GO" id="GO:0003723">
    <property type="term" value="F:RNA binding"/>
    <property type="evidence" value="ECO:0007669"/>
    <property type="project" value="UniProtKB-UniRule"/>
</dbReference>
<dbReference type="GO" id="GO:0006355">
    <property type="term" value="P:regulation of DNA-templated transcription"/>
    <property type="evidence" value="ECO:0007669"/>
    <property type="project" value="InterPro"/>
</dbReference>
<dbReference type="GO" id="GO:0043487">
    <property type="term" value="P:regulation of RNA stability"/>
    <property type="evidence" value="ECO:0007669"/>
    <property type="project" value="TreeGrafter"/>
</dbReference>
<dbReference type="GO" id="GO:0045974">
    <property type="term" value="P:regulation of translation, ncRNA-mediated"/>
    <property type="evidence" value="ECO:0007669"/>
    <property type="project" value="TreeGrafter"/>
</dbReference>
<dbReference type="CDD" id="cd01716">
    <property type="entry name" value="Hfq"/>
    <property type="match status" value="1"/>
</dbReference>
<dbReference type="FunFam" id="2.30.30.100:FF:000001">
    <property type="entry name" value="RNA-binding protein Hfq"/>
    <property type="match status" value="1"/>
</dbReference>
<dbReference type="Gene3D" id="2.30.30.100">
    <property type="match status" value="1"/>
</dbReference>
<dbReference type="HAMAP" id="MF_00436">
    <property type="entry name" value="Hfq"/>
    <property type="match status" value="1"/>
</dbReference>
<dbReference type="InterPro" id="IPR005001">
    <property type="entry name" value="Hfq"/>
</dbReference>
<dbReference type="InterPro" id="IPR010920">
    <property type="entry name" value="LSM_dom_sf"/>
</dbReference>
<dbReference type="InterPro" id="IPR047575">
    <property type="entry name" value="Sm"/>
</dbReference>
<dbReference type="NCBIfam" id="TIGR02383">
    <property type="entry name" value="Hfq"/>
    <property type="match status" value="1"/>
</dbReference>
<dbReference type="NCBIfam" id="NF001602">
    <property type="entry name" value="PRK00395.1"/>
    <property type="match status" value="1"/>
</dbReference>
<dbReference type="PANTHER" id="PTHR34772">
    <property type="entry name" value="RNA-BINDING PROTEIN HFQ"/>
    <property type="match status" value="1"/>
</dbReference>
<dbReference type="PANTHER" id="PTHR34772:SF1">
    <property type="entry name" value="RNA-BINDING PROTEIN HFQ"/>
    <property type="match status" value="1"/>
</dbReference>
<dbReference type="Pfam" id="PF17209">
    <property type="entry name" value="Hfq"/>
    <property type="match status" value="1"/>
</dbReference>
<dbReference type="SUPFAM" id="SSF50182">
    <property type="entry name" value="Sm-like ribonucleoproteins"/>
    <property type="match status" value="1"/>
</dbReference>
<dbReference type="PROSITE" id="PS52002">
    <property type="entry name" value="SM"/>
    <property type="match status" value="1"/>
</dbReference>
<sequence>MAKGQSLQDPYLNALRRERIPVSIYLVNGIKLQGQIESFDQFVILLKNTVSQMVYKHAISTVVPARSVSHNNGGTSHTQQAPAVEAVADKAE</sequence>
<proteinExistence type="inferred from homology"/>